<sequence>MKILLIGYGAMNQRVARLAEEKGHEIVGVIENTPKATTPYQQYQHIADVKGADVAIDFSNPNLLFPLLDEDFHLPLVVATTGEKEKLLNKLDELSQNMPVFFSANMSYGVHALTKILAAAVPLLDDFDIELTEAHHNKKVDAPSGTLEKLYDVIVSLKENVTPVYDRHELNEKRQPQDIGIHSIRGGTIVGEHEVLFAGTDETIQITHRAQSKDIFANGAIQAAERLVNKPNGFYTFDNL</sequence>
<gene>
    <name evidence="1" type="primary">dapB</name>
    <name type="ordered locus">NWMN_1307</name>
</gene>
<reference key="1">
    <citation type="journal article" date="2008" name="J. Bacteriol.">
        <title>Genome sequence of Staphylococcus aureus strain Newman and comparative analysis of staphylococcal genomes: polymorphism and evolution of two major pathogenicity islands.</title>
        <authorList>
            <person name="Baba T."/>
            <person name="Bae T."/>
            <person name="Schneewind O."/>
            <person name="Takeuchi F."/>
            <person name="Hiramatsu K."/>
        </authorList>
    </citation>
    <scope>NUCLEOTIDE SEQUENCE [LARGE SCALE GENOMIC DNA]</scope>
    <source>
        <strain>Newman</strain>
    </source>
</reference>
<proteinExistence type="inferred from homology"/>
<organism>
    <name type="scientific">Staphylococcus aureus (strain Newman)</name>
    <dbReference type="NCBI Taxonomy" id="426430"/>
    <lineage>
        <taxon>Bacteria</taxon>
        <taxon>Bacillati</taxon>
        <taxon>Bacillota</taxon>
        <taxon>Bacilli</taxon>
        <taxon>Bacillales</taxon>
        <taxon>Staphylococcaceae</taxon>
        <taxon>Staphylococcus</taxon>
    </lineage>
</organism>
<evidence type="ECO:0000255" key="1">
    <source>
        <dbReference type="HAMAP-Rule" id="MF_00102"/>
    </source>
</evidence>
<evidence type="ECO:0000305" key="2"/>
<keyword id="KW-0028">Amino-acid biosynthesis</keyword>
<keyword id="KW-0963">Cytoplasm</keyword>
<keyword id="KW-0220">Diaminopimelate biosynthesis</keyword>
<keyword id="KW-0457">Lysine biosynthesis</keyword>
<keyword id="KW-0520">NAD</keyword>
<keyword id="KW-0521">NADP</keyword>
<keyword id="KW-0560">Oxidoreductase</keyword>
<comment type="function">
    <text evidence="1">Catalyzes the conversion of 4-hydroxy-tetrahydrodipicolinate (HTPA) to tetrahydrodipicolinate.</text>
</comment>
<comment type="catalytic activity">
    <reaction evidence="1">
        <text>(S)-2,3,4,5-tetrahydrodipicolinate + NAD(+) + H2O = (2S,4S)-4-hydroxy-2,3,4,5-tetrahydrodipicolinate + NADH + H(+)</text>
        <dbReference type="Rhea" id="RHEA:35323"/>
        <dbReference type="ChEBI" id="CHEBI:15377"/>
        <dbReference type="ChEBI" id="CHEBI:15378"/>
        <dbReference type="ChEBI" id="CHEBI:16845"/>
        <dbReference type="ChEBI" id="CHEBI:57540"/>
        <dbReference type="ChEBI" id="CHEBI:57945"/>
        <dbReference type="ChEBI" id="CHEBI:67139"/>
        <dbReference type="EC" id="1.17.1.8"/>
    </reaction>
</comment>
<comment type="catalytic activity">
    <reaction evidence="1">
        <text>(S)-2,3,4,5-tetrahydrodipicolinate + NADP(+) + H2O = (2S,4S)-4-hydroxy-2,3,4,5-tetrahydrodipicolinate + NADPH + H(+)</text>
        <dbReference type="Rhea" id="RHEA:35331"/>
        <dbReference type="ChEBI" id="CHEBI:15377"/>
        <dbReference type="ChEBI" id="CHEBI:15378"/>
        <dbReference type="ChEBI" id="CHEBI:16845"/>
        <dbReference type="ChEBI" id="CHEBI:57783"/>
        <dbReference type="ChEBI" id="CHEBI:58349"/>
        <dbReference type="ChEBI" id="CHEBI:67139"/>
        <dbReference type="EC" id="1.17.1.8"/>
    </reaction>
</comment>
<comment type="pathway">
    <text evidence="1">Amino-acid biosynthesis; L-lysine biosynthesis via DAP pathway; (S)-tetrahydrodipicolinate from L-aspartate: step 4/4.</text>
</comment>
<comment type="subcellular location">
    <subcellularLocation>
        <location evidence="1">Cytoplasm</location>
    </subcellularLocation>
</comment>
<comment type="similarity">
    <text evidence="1">Belongs to the DapB family.</text>
</comment>
<comment type="caution">
    <text evidence="2">Was originally thought to be a dihydrodipicolinate reductase (DHDPR), catalyzing the conversion of dihydrodipicolinate to tetrahydrodipicolinate. However, it was shown in E.coli that the substrate of the enzymatic reaction is not dihydrodipicolinate (DHDP) but in fact (2S,4S)-4-hydroxy-2,3,4,5-tetrahydrodipicolinic acid (HTPA), the product released by the DapA-catalyzed reaction.</text>
</comment>
<protein>
    <recommendedName>
        <fullName evidence="1">4-hydroxy-tetrahydrodipicolinate reductase</fullName>
        <shortName evidence="1">HTPA reductase</shortName>
        <ecNumber evidence="1">1.17.1.8</ecNumber>
    </recommendedName>
</protein>
<accession>A6QGU7</accession>
<dbReference type="EC" id="1.17.1.8" evidence="1"/>
<dbReference type="EMBL" id="AP009351">
    <property type="protein sequence ID" value="BAF67579.1"/>
    <property type="molecule type" value="Genomic_DNA"/>
</dbReference>
<dbReference type="RefSeq" id="WP_000698235.1">
    <property type="nucleotide sequence ID" value="NZ_JBBIAE010000001.1"/>
</dbReference>
<dbReference type="SMR" id="A6QGU7"/>
<dbReference type="KEGG" id="sae:NWMN_1307"/>
<dbReference type="HOGENOM" id="CLU_047479_2_2_9"/>
<dbReference type="UniPathway" id="UPA00034">
    <property type="reaction ID" value="UER00018"/>
</dbReference>
<dbReference type="Proteomes" id="UP000006386">
    <property type="component" value="Chromosome"/>
</dbReference>
<dbReference type="GO" id="GO:0005829">
    <property type="term" value="C:cytosol"/>
    <property type="evidence" value="ECO:0007669"/>
    <property type="project" value="TreeGrafter"/>
</dbReference>
<dbReference type="GO" id="GO:0008839">
    <property type="term" value="F:4-hydroxy-tetrahydrodipicolinate reductase"/>
    <property type="evidence" value="ECO:0007669"/>
    <property type="project" value="UniProtKB-EC"/>
</dbReference>
<dbReference type="GO" id="GO:0051287">
    <property type="term" value="F:NAD binding"/>
    <property type="evidence" value="ECO:0007669"/>
    <property type="project" value="UniProtKB-UniRule"/>
</dbReference>
<dbReference type="GO" id="GO:0050661">
    <property type="term" value="F:NADP binding"/>
    <property type="evidence" value="ECO:0007669"/>
    <property type="project" value="UniProtKB-UniRule"/>
</dbReference>
<dbReference type="GO" id="GO:0016726">
    <property type="term" value="F:oxidoreductase activity, acting on CH or CH2 groups, NAD or NADP as acceptor"/>
    <property type="evidence" value="ECO:0007669"/>
    <property type="project" value="UniProtKB-UniRule"/>
</dbReference>
<dbReference type="GO" id="GO:0019877">
    <property type="term" value="P:diaminopimelate biosynthetic process"/>
    <property type="evidence" value="ECO:0007669"/>
    <property type="project" value="UniProtKB-UniRule"/>
</dbReference>
<dbReference type="GO" id="GO:0009089">
    <property type="term" value="P:lysine biosynthetic process via diaminopimelate"/>
    <property type="evidence" value="ECO:0007669"/>
    <property type="project" value="UniProtKB-UniRule"/>
</dbReference>
<dbReference type="CDD" id="cd02274">
    <property type="entry name" value="DHDPR_N"/>
    <property type="match status" value="1"/>
</dbReference>
<dbReference type="FunFam" id="3.30.360.10:FF:000009">
    <property type="entry name" value="4-hydroxy-tetrahydrodipicolinate reductase"/>
    <property type="match status" value="1"/>
</dbReference>
<dbReference type="Gene3D" id="3.30.360.10">
    <property type="entry name" value="Dihydrodipicolinate Reductase, domain 2"/>
    <property type="match status" value="1"/>
</dbReference>
<dbReference type="Gene3D" id="3.40.50.720">
    <property type="entry name" value="NAD(P)-binding Rossmann-like Domain"/>
    <property type="match status" value="1"/>
</dbReference>
<dbReference type="HAMAP" id="MF_00102">
    <property type="entry name" value="DapB"/>
    <property type="match status" value="1"/>
</dbReference>
<dbReference type="InterPro" id="IPR022663">
    <property type="entry name" value="DapB_C"/>
</dbReference>
<dbReference type="InterPro" id="IPR000846">
    <property type="entry name" value="DapB_N"/>
</dbReference>
<dbReference type="InterPro" id="IPR022664">
    <property type="entry name" value="DapB_N_CS"/>
</dbReference>
<dbReference type="InterPro" id="IPR023940">
    <property type="entry name" value="DHDPR_bac"/>
</dbReference>
<dbReference type="InterPro" id="IPR036291">
    <property type="entry name" value="NAD(P)-bd_dom_sf"/>
</dbReference>
<dbReference type="NCBIfam" id="TIGR00036">
    <property type="entry name" value="dapB"/>
    <property type="match status" value="1"/>
</dbReference>
<dbReference type="PANTHER" id="PTHR20836:SF7">
    <property type="entry name" value="4-HYDROXY-TETRAHYDRODIPICOLINATE REDUCTASE"/>
    <property type="match status" value="1"/>
</dbReference>
<dbReference type="PANTHER" id="PTHR20836">
    <property type="entry name" value="DIHYDRODIPICOLINATE REDUCTASE"/>
    <property type="match status" value="1"/>
</dbReference>
<dbReference type="Pfam" id="PF05173">
    <property type="entry name" value="DapB_C"/>
    <property type="match status" value="1"/>
</dbReference>
<dbReference type="Pfam" id="PF01113">
    <property type="entry name" value="DapB_N"/>
    <property type="match status" value="1"/>
</dbReference>
<dbReference type="PIRSF" id="PIRSF000161">
    <property type="entry name" value="DHPR"/>
    <property type="match status" value="1"/>
</dbReference>
<dbReference type="SUPFAM" id="SSF55347">
    <property type="entry name" value="Glyceraldehyde-3-phosphate dehydrogenase-like, C-terminal domain"/>
    <property type="match status" value="1"/>
</dbReference>
<dbReference type="SUPFAM" id="SSF51735">
    <property type="entry name" value="NAD(P)-binding Rossmann-fold domains"/>
    <property type="match status" value="1"/>
</dbReference>
<dbReference type="PROSITE" id="PS01298">
    <property type="entry name" value="DAPB"/>
    <property type="match status" value="1"/>
</dbReference>
<feature type="chain" id="PRO_1000094007" description="4-hydroxy-tetrahydrodipicolinate reductase">
    <location>
        <begin position="1"/>
        <end position="240"/>
    </location>
</feature>
<feature type="active site" description="Proton donor/acceptor" evidence="1">
    <location>
        <position position="135"/>
    </location>
</feature>
<feature type="active site" description="Proton donor" evidence="1">
    <location>
        <position position="139"/>
    </location>
</feature>
<feature type="binding site" evidence="1">
    <location>
        <begin position="79"/>
        <end position="81"/>
    </location>
    <ligand>
        <name>NAD(+)</name>
        <dbReference type="ChEBI" id="CHEBI:57540"/>
    </ligand>
</feature>
<feature type="binding site" evidence="1">
    <location>
        <begin position="103"/>
        <end position="106"/>
    </location>
    <ligand>
        <name>NAD(+)</name>
        <dbReference type="ChEBI" id="CHEBI:57540"/>
    </ligand>
</feature>
<feature type="binding site" evidence="1">
    <location>
        <position position="136"/>
    </location>
    <ligand>
        <name>(S)-2,3,4,5-tetrahydrodipicolinate</name>
        <dbReference type="ChEBI" id="CHEBI:16845"/>
    </ligand>
</feature>
<feature type="binding site" evidence="1">
    <location>
        <begin position="145"/>
        <end position="146"/>
    </location>
    <ligand>
        <name>(S)-2,3,4,5-tetrahydrodipicolinate</name>
        <dbReference type="ChEBI" id="CHEBI:16845"/>
    </ligand>
</feature>
<name>DAPB_STAAE</name>